<dbReference type="EC" id="4.2.1.109" evidence="1"/>
<dbReference type="EMBL" id="DS985255">
    <property type="protein sequence ID" value="EDV21049.1"/>
    <property type="molecule type" value="Genomic_DNA"/>
</dbReference>
<dbReference type="RefSeq" id="XP_002116379.1">
    <property type="nucleotide sequence ID" value="XM_002116343.1"/>
</dbReference>
<dbReference type="SMR" id="B3S866"/>
<dbReference type="FunCoup" id="B3S866">
    <property type="interactions" value="1379"/>
</dbReference>
<dbReference type="STRING" id="10228.B3S866"/>
<dbReference type="EnsemblMetazoa" id="TriadT64275">
    <property type="protein sequence ID" value="TriadP64275"/>
    <property type="gene ID" value="TriadG64275"/>
</dbReference>
<dbReference type="GeneID" id="6757592"/>
<dbReference type="KEGG" id="tad:TRIADDRAFT_64275"/>
<dbReference type="CTD" id="6757592"/>
<dbReference type="eggNOG" id="KOG2631">
    <property type="taxonomic scope" value="Eukaryota"/>
</dbReference>
<dbReference type="HOGENOM" id="CLU_006033_4_0_1"/>
<dbReference type="InParanoid" id="B3S866"/>
<dbReference type="OMA" id="WFPGTSG"/>
<dbReference type="OrthoDB" id="191080at2759"/>
<dbReference type="PhylomeDB" id="B3S866"/>
<dbReference type="UniPathway" id="UPA00904">
    <property type="reaction ID" value="UER00875"/>
</dbReference>
<dbReference type="Proteomes" id="UP000009022">
    <property type="component" value="Unassembled WGS sequence"/>
</dbReference>
<dbReference type="GO" id="GO:0005737">
    <property type="term" value="C:cytoplasm"/>
    <property type="evidence" value="ECO:0000318"/>
    <property type="project" value="GO_Central"/>
</dbReference>
<dbReference type="GO" id="GO:0046570">
    <property type="term" value="F:methylthioribulose 1-phosphate dehydratase activity"/>
    <property type="evidence" value="ECO:0000318"/>
    <property type="project" value="GO_Central"/>
</dbReference>
<dbReference type="GO" id="GO:0008270">
    <property type="term" value="F:zinc ion binding"/>
    <property type="evidence" value="ECO:0007669"/>
    <property type="project" value="UniProtKB-UniRule"/>
</dbReference>
<dbReference type="GO" id="GO:0019509">
    <property type="term" value="P:L-methionine salvage from methylthioadenosine"/>
    <property type="evidence" value="ECO:0000318"/>
    <property type="project" value="GO_Central"/>
</dbReference>
<dbReference type="FunFam" id="3.40.225.10:FF:000003">
    <property type="entry name" value="Methylthioribulose-1-phosphate dehydratase"/>
    <property type="match status" value="1"/>
</dbReference>
<dbReference type="Gene3D" id="3.40.225.10">
    <property type="entry name" value="Class II aldolase/adducin N-terminal domain"/>
    <property type="match status" value="1"/>
</dbReference>
<dbReference type="HAMAP" id="MF_03116">
    <property type="entry name" value="Salvage_MtnB_euk"/>
    <property type="match status" value="1"/>
</dbReference>
<dbReference type="InterPro" id="IPR001303">
    <property type="entry name" value="Aldolase_II/adducin_N"/>
</dbReference>
<dbReference type="InterPro" id="IPR036409">
    <property type="entry name" value="Aldolase_II/adducin_N_sf"/>
</dbReference>
<dbReference type="InterPro" id="IPR017714">
    <property type="entry name" value="MethylthioRu-1-P_deHdtase_MtnB"/>
</dbReference>
<dbReference type="InterPro" id="IPR027514">
    <property type="entry name" value="Salvage_MtnB_euk"/>
</dbReference>
<dbReference type="NCBIfam" id="TIGR03328">
    <property type="entry name" value="salvage_mtnB"/>
    <property type="match status" value="1"/>
</dbReference>
<dbReference type="PANTHER" id="PTHR10640">
    <property type="entry name" value="METHYLTHIORIBULOSE-1-PHOSPHATE DEHYDRATASE"/>
    <property type="match status" value="1"/>
</dbReference>
<dbReference type="PANTHER" id="PTHR10640:SF7">
    <property type="entry name" value="METHYLTHIORIBULOSE-1-PHOSPHATE DEHYDRATASE"/>
    <property type="match status" value="1"/>
</dbReference>
<dbReference type="Pfam" id="PF00596">
    <property type="entry name" value="Aldolase_II"/>
    <property type="match status" value="1"/>
</dbReference>
<dbReference type="SMART" id="SM01007">
    <property type="entry name" value="Aldolase_II"/>
    <property type="match status" value="1"/>
</dbReference>
<dbReference type="SUPFAM" id="SSF53639">
    <property type="entry name" value="AraD/HMP-PK domain-like"/>
    <property type="match status" value="1"/>
</dbReference>
<organism>
    <name type="scientific">Trichoplax adhaerens</name>
    <name type="common">Trichoplax reptans</name>
    <dbReference type="NCBI Taxonomy" id="10228"/>
    <lineage>
        <taxon>Eukaryota</taxon>
        <taxon>Metazoa</taxon>
        <taxon>Placozoa</taxon>
        <taxon>Uniplacotomia</taxon>
        <taxon>Trichoplacea</taxon>
        <taxon>Trichoplacidae</taxon>
        <taxon>Trichoplax</taxon>
    </lineage>
</organism>
<name>MTNB_TRIAD</name>
<sequence length="236" mass="27367">MQNVQQPKKRKLSDEIIAEDEDYQRDPEHPRNLIPEICRLLYSQEAMTGSGGAISMRRNDKIYVAPSGVQKERLQPEDMFVINDDGDTLKLPLNGKICRMSQCTPLFLTIYRLRGSECVIHSHSKRAVLATIISSGNEFRISDLQMIKGIYKRTENRNYRFGEEVVIPIIENTPTDPELQENLVKAMENYPDTCCVLIRRHGLYIWGTTWQQAKLMYECYEYLFDIAIQLKQLGMN</sequence>
<keyword id="KW-0028">Amino-acid biosynthesis</keyword>
<keyword id="KW-0963">Cytoplasm</keyword>
<keyword id="KW-0456">Lyase</keyword>
<keyword id="KW-0479">Metal-binding</keyword>
<keyword id="KW-0486">Methionine biosynthesis</keyword>
<keyword id="KW-1185">Reference proteome</keyword>
<keyword id="KW-0862">Zinc</keyword>
<proteinExistence type="inferred from homology"/>
<feature type="chain" id="PRO_0000393860" description="Probable methylthioribulose-1-phosphate dehydratase">
    <location>
        <begin position="1"/>
        <end position="236"/>
    </location>
</feature>
<feature type="region of interest" description="Disordered" evidence="2">
    <location>
        <begin position="1"/>
        <end position="29"/>
    </location>
</feature>
<feature type="binding site" evidence="1">
    <location>
        <position position="103"/>
    </location>
    <ligand>
        <name>substrate</name>
    </ligand>
</feature>
<feature type="binding site" evidence="1">
    <location>
        <position position="121"/>
    </location>
    <ligand>
        <name>Zn(2+)</name>
        <dbReference type="ChEBI" id="CHEBI:29105"/>
    </ligand>
</feature>
<feature type="binding site" evidence="1">
    <location>
        <position position="123"/>
    </location>
    <ligand>
        <name>Zn(2+)</name>
        <dbReference type="ChEBI" id="CHEBI:29105"/>
    </ligand>
</feature>
<feature type="binding site" evidence="1">
    <location>
        <position position="201"/>
    </location>
    <ligand>
        <name>Zn(2+)</name>
        <dbReference type="ChEBI" id="CHEBI:29105"/>
    </ligand>
</feature>
<gene>
    <name type="ORF">TRIADDRAFT_64275</name>
</gene>
<comment type="function">
    <text evidence="1">Catalyzes the dehydration of methylthioribulose-1-phosphate (MTRu-1-P) into 2,3-diketo-5-methylthiopentyl-1-phosphate (DK-MTP-1-P).</text>
</comment>
<comment type="catalytic activity">
    <reaction evidence="1">
        <text>5-(methylsulfanyl)-D-ribulose 1-phosphate = 5-methylsulfanyl-2,3-dioxopentyl phosphate + H2O</text>
        <dbReference type="Rhea" id="RHEA:15549"/>
        <dbReference type="ChEBI" id="CHEBI:15377"/>
        <dbReference type="ChEBI" id="CHEBI:58548"/>
        <dbReference type="ChEBI" id="CHEBI:58828"/>
        <dbReference type="EC" id="4.2.1.109"/>
    </reaction>
</comment>
<comment type="cofactor">
    <cofactor evidence="1">
        <name>Zn(2+)</name>
        <dbReference type="ChEBI" id="CHEBI:29105"/>
    </cofactor>
    <text evidence="1">Binds 1 zinc ion per subunit.</text>
</comment>
<comment type="pathway">
    <text evidence="1">Amino-acid biosynthesis; L-methionine biosynthesis via salvage pathway; L-methionine from S-methyl-5-thio-alpha-D-ribose 1-phosphate: step 2/6.</text>
</comment>
<comment type="subcellular location">
    <subcellularLocation>
        <location evidence="1">Cytoplasm</location>
    </subcellularLocation>
</comment>
<comment type="similarity">
    <text evidence="1">Belongs to the aldolase class II family. MtnB subfamily.</text>
</comment>
<protein>
    <recommendedName>
        <fullName evidence="1">Probable methylthioribulose-1-phosphate dehydratase</fullName>
        <shortName evidence="1">MTRu-1-P dehydratase</shortName>
        <ecNumber evidence="1">4.2.1.109</ecNumber>
    </recommendedName>
</protein>
<reference key="1">
    <citation type="journal article" date="2008" name="Nature">
        <title>The Trichoplax genome and the nature of placozoans.</title>
        <authorList>
            <person name="Srivastava M."/>
            <person name="Begovic E."/>
            <person name="Chapman J."/>
            <person name="Putnam N.H."/>
            <person name="Hellsten U."/>
            <person name="Kawashima T."/>
            <person name="Kuo A."/>
            <person name="Mitros T."/>
            <person name="Salamov A."/>
            <person name="Carpenter M.L."/>
            <person name="Signorovitch A.Y."/>
            <person name="Moreno M.A."/>
            <person name="Kamm K."/>
            <person name="Grimwood J."/>
            <person name="Schmutz J."/>
            <person name="Shapiro H."/>
            <person name="Grigoriev I.V."/>
            <person name="Buss L.W."/>
            <person name="Schierwater B."/>
            <person name="Dellaporta S.L."/>
            <person name="Rokhsar D.S."/>
        </authorList>
    </citation>
    <scope>NUCLEOTIDE SEQUENCE [LARGE SCALE GENOMIC DNA]</scope>
    <source>
        <strain>Grell-BS-1999</strain>
    </source>
</reference>
<evidence type="ECO:0000255" key="1">
    <source>
        <dbReference type="HAMAP-Rule" id="MF_03116"/>
    </source>
</evidence>
<evidence type="ECO:0000256" key="2">
    <source>
        <dbReference type="SAM" id="MobiDB-lite"/>
    </source>
</evidence>
<accession>B3S866</accession>